<dbReference type="EMBL" id="CP000970">
    <property type="protein sequence ID" value="ACB18142.1"/>
    <property type="molecule type" value="Genomic_DNA"/>
</dbReference>
<dbReference type="RefSeq" id="WP_000396038.1">
    <property type="nucleotide sequence ID" value="NC_010498.1"/>
</dbReference>
<dbReference type="SMR" id="B1LGU8"/>
<dbReference type="KEGG" id="ecm:EcSMS35_0157"/>
<dbReference type="HOGENOM" id="CLU_052299_2_0_6"/>
<dbReference type="Proteomes" id="UP000007011">
    <property type="component" value="Chromosome"/>
</dbReference>
<dbReference type="GO" id="GO:0003677">
    <property type="term" value="F:DNA binding"/>
    <property type="evidence" value="ECO:0007669"/>
    <property type="project" value="UniProtKB-KW"/>
</dbReference>
<dbReference type="CDD" id="cd22359">
    <property type="entry name" value="SfsA-like_bacterial"/>
    <property type="match status" value="1"/>
</dbReference>
<dbReference type="FunFam" id="2.40.50.580:FF:000001">
    <property type="entry name" value="Sugar fermentation stimulation protein A"/>
    <property type="match status" value="1"/>
</dbReference>
<dbReference type="FunFam" id="3.40.1350.60:FF:000001">
    <property type="entry name" value="Sugar fermentation stimulation protein A"/>
    <property type="match status" value="1"/>
</dbReference>
<dbReference type="Gene3D" id="2.40.50.580">
    <property type="match status" value="1"/>
</dbReference>
<dbReference type="Gene3D" id="3.40.1350.60">
    <property type="match status" value="1"/>
</dbReference>
<dbReference type="HAMAP" id="MF_00095">
    <property type="entry name" value="SfsA"/>
    <property type="match status" value="1"/>
</dbReference>
<dbReference type="InterPro" id="IPR005224">
    <property type="entry name" value="SfsA"/>
</dbReference>
<dbReference type="InterPro" id="IPR040452">
    <property type="entry name" value="SfsA_C"/>
</dbReference>
<dbReference type="InterPro" id="IPR041465">
    <property type="entry name" value="SfsA_N"/>
</dbReference>
<dbReference type="NCBIfam" id="TIGR00230">
    <property type="entry name" value="sfsA"/>
    <property type="match status" value="1"/>
</dbReference>
<dbReference type="PANTHER" id="PTHR30545">
    <property type="entry name" value="SUGAR FERMENTATION STIMULATION PROTEIN A"/>
    <property type="match status" value="1"/>
</dbReference>
<dbReference type="PANTHER" id="PTHR30545:SF2">
    <property type="entry name" value="SUGAR FERMENTATION STIMULATION PROTEIN A"/>
    <property type="match status" value="1"/>
</dbReference>
<dbReference type="Pfam" id="PF03749">
    <property type="entry name" value="SfsA"/>
    <property type="match status" value="1"/>
</dbReference>
<dbReference type="Pfam" id="PF17746">
    <property type="entry name" value="SfsA_N"/>
    <property type="match status" value="1"/>
</dbReference>
<reference key="1">
    <citation type="journal article" date="2008" name="J. Bacteriol.">
        <title>Insights into the environmental resistance gene pool from the genome sequence of the multidrug-resistant environmental isolate Escherichia coli SMS-3-5.</title>
        <authorList>
            <person name="Fricke W.F."/>
            <person name="Wright M.S."/>
            <person name="Lindell A.H."/>
            <person name="Harkins D.M."/>
            <person name="Baker-Austin C."/>
            <person name="Ravel J."/>
            <person name="Stepanauskas R."/>
        </authorList>
    </citation>
    <scope>NUCLEOTIDE SEQUENCE [LARGE SCALE GENOMIC DNA]</scope>
    <source>
        <strain>SMS-3-5 / SECEC</strain>
    </source>
</reference>
<organism>
    <name type="scientific">Escherichia coli (strain SMS-3-5 / SECEC)</name>
    <dbReference type="NCBI Taxonomy" id="439855"/>
    <lineage>
        <taxon>Bacteria</taxon>
        <taxon>Pseudomonadati</taxon>
        <taxon>Pseudomonadota</taxon>
        <taxon>Gammaproteobacteria</taxon>
        <taxon>Enterobacterales</taxon>
        <taxon>Enterobacteriaceae</taxon>
        <taxon>Escherichia</taxon>
    </lineage>
</organism>
<name>SFSA_ECOSM</name>
<sequence length="234" mass="26229">MEFSPPLQRATLIQRYKRFLADVITPDGRELTLHCPNTGAMTGCATPGDTVWYSTSDNTKRKYPHTWELTQSQSGAFICVNTLWANRLTKEAILNESISELSGYSSLKSEVKYGAERSRIDFMLQADSRPDCYIEVKSVTLAENEQGYFPDAVTERGQKHLRELMSVAAEGQRAVIFFAVLHSAITRFSPARHIDEKYAQLLSEAQQRGVEILAYKAELSAEGMALKKSLPVTL</sequence>
<evidence type="ECO:0000255" key="1">
    <source>
        <dbReference type="HAMAP-Rule" id="MF_00095"/>
    </source>
</evidence>
<proteinExistence type="inferred from homology"/>
<gene>
    <name evidence="1" type="primary">sfsA</name>
    <name type="ordered locus">EcSMS35_0157</name>
</gene>
<comment type="function">
    <text evidence="1">Binds to DNA non-specifically. Could be a regulatory factor involved in maltose metabolism.</text>
</comment>
<comment type="similarity">
    <text evidence="1">Belongs to the SfsA family.</text>
</comment>
<feature type="chain" id="PRO_1000117271" description="Sugar fermentation stimulation protein A">
    <location>
        <begin position="1"/>
        <end position="234"/>
    </location>
</feature>
<feature type="DNA-binding region" description="H-T-H motif" evidence="1">
    <location>
        <begin position="201"/>
        <end position="220"/>
    </location>
</feature>
<protein>
    <recommendedName>
        <fullName evidence="1">Sugar fermentation stimulation protein A</fullName>
    </recommendedName>
</protein>
<keyword id="KW-0238">DNA-binding</keyword>
<accession>B1LGU8</accession>